<proteinExistence type="inferred from homology"/>
<gene>
    <name type="primary">gerIA</name>
</gene>
<accession>O85467</accession>
<reference key="1">
    <citation type="journal article" date="1998" name="J. Bacteriol.">
        <title>Role of the gerI operon of Bacillus cereus 569 in the response of spores to germinants.</title>
        <authorList>
            <person name="Clements M.O."/>
            <person name="Moir A."/>
        </authorList>
    </citation>
    <scope>NUCLEOTIDE SEQUENCE [GENOMIC DNA]</scope>
    <source>
        <strain>ATCC 10876 / DSM 9378 / NRRL B-569</strain>
    </source>
</reference>
<dbReference type="EMBL" id="AF067645">
    <property type="protein sequence ID" value="AAD03541.1"/>
    <property type="molecule type" value="Genomic_DNA"/>
</dbReference>
<dbReference type="SMR" id="O85467"/>
<dbReference type="GO" id="GO:0005886">
    <property type="term" value="C:plasma membrane"/>
    <property type="evidence" value="ECO:0007669"/>
    <property type="project" value="UniProtKB-SubCell"/>
</dbReference>
<dbReference type="GO" id="GO:0009847">
    <property type="term" value="P:spore germination"/>
    <property type="evidence" value="ECO:0007669"/>
    <property type="project" value="InterPro"/>
</dbReference>
<dbReference type="InterPro" id="IPR004995">
    <property type="entry name" value="Spore_Ger"/>
</dbReference>
<dbReference type="InterPro" id="IPR050768">
    <property type="entry name" value="UPF0353/GerABKA_families"/>
</dbReference>
<dbReference type="PANTHER" id="PTHR22550:SF5">
    <property type="entry name" value="LEUCINE ZIPPER PROTEIN 4"/>
    <property type="match status" value="1"/>
</dbReference>
<dbReference type="PANTHER" id="PTHR22550">
    <property type="entry name" value="SPORE GERMINATION PROTEIN"/>
    <property type="match status" value="1"/>
</dbReference>
<dbReference type="Pfam" id="PF03323">
    <property type="entry name" value="GerA"/>
    <property type="match status" value="1"/>
</dbReference>
<comment type="function">
    <text>Required for inosine germination.</text>
</comment>
<comment type="subcellular location">
    <subcellularLocation>
        <location evidence="3">Cell membrane</location>
        <topology evidence="3">Multi-pass membrane protein</topology>
    </subcellularLocation>
</comment>
<comment type="similarity">
    <text evidence="3">Belongs to the GerABKA family.</text>
</comment>
<sequence>MIWNWLRKKKKSNTSKLNETDNQEQHSNNQEDDNKEQTRSMKHNKGKNNEQKDSSQDKQQSAKQGDSSQDKQQNPKQEDSSQDKQQNPKQGDSSQDKQQSAKQKDPSQDKQQNPKQEDSSQDKQQSAKQGDSSQDKQQSAKQGDSSQDKQQNAKQDEPSQSKQQSSGGNSIYDFTKPEKDRIHSLQNLIEKLKKSSDFVNYHTSDDETMPYWISYYRPSLDGEKLQKYLMPTLLERPNASLEELKEHIPMSGITITNDLQKIEDMVLKGHAIIQLNQQDQKCMLANIAIDNYRAPTPPLNESTVIGPQEGFVEDIDTNINLVRKRLPVLDLQTKEMIIGEFSKTKVVMMYLDNLAEKDNVDFLEESLRALEYDQINDSAYLQELMGEKSIFPLYINTERTDRVTKALIDGKIAIFVDGSPSVLLTPVSYFDFFISPEDYNVSWMYATFSRILRLIAVLFSICATPLYVAVLNYHYELIPSDLLETLILSRAQVPFPPLIEALFLELAIDLLREAGARLPMKVGQTLGIVGGIVIGQASVQAGLTSNILLIIVALSALASFITPIYKMGNAVRLLRFPFLAFAEIGGLFGISLGFIFLFTHLFRLTSLRKPYALFYPTRQQSVKDSWIRFPLTMIDTRDVQARPQHVKKAAKGISTKHRSDFDD</sequence>
<feature type="chain" id="PRO_0000164017" description="Spore germination protein GerIA">
    <location>
        <begin position="1"/>
        <end position="663"/>
    </location>
</feature>
<feature type="transmembrane region" description="Helical" evidence="1">
    <location>
        <begin position="414"/>
        <end position="434"/>
    </location>
</feature>
<feature type="transmembrane region" description="Helical" evidence="1">
    <location>
        <begin position="451"/>
        <end position="471"/>
    </location>
</feature>
<feature type="transmembrane region" description="Helical" evidence="1">
    <location>
        <begin position="491"/>
        <end position="511"/>
    </location>
</feature>
<feature type="transmembrane region" description="Helical" evidence="1">
    <location>
        <begin position="541"/>
        <end position="561"/>
    </location>
</feature>
<feature type="transmembrane region" description="Helical" evidence="1">
    <location>
        <begin position="578"/>
        <end position="598"/>
    </location>
</feature>
<feature type="region of interest" description="Disordered" evidence="2">
    <location>
        <begin position="1"/>
        <end position="175"/>
    </location>
</feature>
<feature type="compositionally biased region" description="Basic residues" evidence="2">
    <location>
        <begin position="1"/>
        <end position="13"/>
    </location>
</feature>
<feature type="compositionally biased region" description="Basic and acidic residues" evidence="2">
    <location>
        <begin position="47"/>
        <end position="56"/>
    </location>
</feature>
<feature type="compositionally biased region" description="Low complexity" evidence="2">
    <location>
        <begin position="57"/>
        <end position="72"/>
    </location>
</feature>
<feature type="compositionally biased region" description="Low complexity" evidence="2">
    <location>
        <begin position="88"/>
        <end position="101"/>
    </location>
</feature>
<feature type="compositionally biased region" description="Low complexity" evidence="2">
    <location>
        <begin position="122"/>
        <end position="150"/>
    </location>
</feature>
<protein>
    <recommendedName>
        <fullName>Spore germination protein GerIA</fullName>
    </recommendedName>
</protein>
<evidence type="ECO:0000255" key="1"/>
<evidence type="ECO:0000256" key="2">
    <source>
        <dbReference type="SAM" id="MobiDB-lite"/>
    </source>
</evidence>
<evidence type="ECO:0000305" key="3"/>
<name>GERIA_BACCE</name>
<keyword id="KW-1003">Cell membrane</keyword>
<keyword id="KW-0309">Germination</keyword>
<keyword id="KW-0472">Membrane</keyword>
<keyword id="KW-0812">Transmembrane</keyword>
<keyword id="KW-1133">Transmembrane helix</keyword>
<organism>
    <name type="scientific">Bacillus cereus</name>
    <dbReference type="NCBI Taxonomy" id="1396"/>
    <lineage>
        <taxon>Bacteria</taxon>
        <taxon>Bacillati</taxon>
        <taxon>Bacillota</taxon>
        <taxon>Bacilli</taxon>
        <taxon>Bacillales</taxon>
        <taxon>Bacillaceae</taxon>
        <taxon>Bacillus</taxon>
        <taxon>Bacillus cereus group</taxon>
    </lineage>
</organism>